<protein>
    <recommendedName>
        <fullName evidence="3">Methanethiol S-methyltransferase</fullName>
        <ecNumber evidence="2">2.1.1.334</ecNumber>
    </recommendedName>
</protein>
<organism>
    <name type="scientific">Pseudomonas deceptionensis</name>
    <dbReference type="NCBI Taxonomy" id="882211"/>
    <lineage>
        <taxon>Bacteria</taxon>
        <taxon>Pseudomonadati</taxon>
        <taxon>Pseudomonadota</taxon>
        <taxon>Gammaproteobacteria</taxon>
        <taxon>Pseudomonadales</taxon>
        <taxon>Pseudomonadaceae</taxon>
        <taxon>Pseudomonas</taxon>
    </lineage>
</organism>
<evidence type="ECO:0000255" key="1"/>
<evidence type="ECO:0000269" key="2">
    <source>
    </source>
</evidence>
<evidence type="ECO:0000303" key="3">
    <source>
    </source>
</evidence>
<evidence type="ECO:0000305" key="4"/>
<evidence type="ECO:0000312" key="5">
    <source>
        <dbReference type="EMBL" id="AJE75769.1"/>
    </source>
</evidence>
<evidence type="ECO:0000312" key="6">
    <source>
        <dbReference type="EMBL" id="SEF08080.1"/>
    </source>
</evidence>
<evidence type="ECO:0000312" key="7">
    <source>
        <dbReference type="Proteomes" id="UP000183613"/>
    </source>
</evidence>
<gene>
    <name evidence="3" type="primary">mddA</name>
    <name evidence="6" type="ORF">SAMN04489800_4417</name>
</gene>
<accession>A0A0F6P9C0</accession>
<feature type="chain" id="PRO_0000444496" description="Methanethiol S-methyltransferase">
    <location>
        <begin position="1"/>
        <end position="262"/>
    </location>
</feature>
<feature type="transmembrane region" description="Helical" evidence="1">
    <location>
        <begin position="22"/>
        <end position="42"/>
    </location>
</feature>
<feature type="transmembrane region" description="Helical" evidence="1">
    <location>
        <begin position="55"/>
        <end position="75"/>
    </location>
</feature>
<feature type="transmembrane region" description="Helical" evidence="1">
    <location>
        <begin position="100"/>
        <end position="120"/>
    </location>
</feature>
<feature type="transmembrane region" description="Helical" evidence="1">
    <location>
        <begin position="134"/>
        <end position="154"/>
    </location>
</feature>
<feature type="transmembrane region" description="Helical" evidence="1">
    <location>
        <begin position="195"/>
        <end position="215"/>
    </location>
</feature>
<reference key="1">
    <citation type="journal article" date="2015" name="Nat. Commun.">
        <title>A novel pathway producing dimethylsulphide in bacteria is widespread in soil environments.</title>
        <authorList>
            <person name="Carrion O."/>
            <person name="Curson A.R."/>
            <person name="Kumaresan D."/>
            <person name="Fu Y."/>
            <person name="Lang A.S."/>
            <person name="Mercade E."/>
            <person name="Todd J.D."/>
        </authorList>
    </citation>
    <scope>NUCLEOTIDE SEQUENCE [GENOMIC DNA]</scope>
    <scope>FUNCTION</scope>
    <scope>CATALYTIC ACTIVITY</scope>
    <scope>DISRUPTION PHENOTYPE</scope>
    <scope>SUBCELLULAR LOCATION</scope>
    <scope>INDUCTION</scope>
    <source>
        <strain evidence="5">M1T</strain>
    </source>
</reference>
<reference key="2">
    <citation type="submission" date="2016-10" db="EMBL/GenBank/DDBJ databases">
        <authorList>
            <person name="Varghese N."/>
        </authorList>
    </citation>
    <scope>NUCLEOTIDE SEQUENCE [LARGE SCALE GENOMIC DNA]</scope>
    <source>
        <strain evidence="6 7">LMG 25555</strain>
    </source>
</reference>
<proteinExistence type="evidence at protein level"/>
<dbReference type="EC" id="2.1.1.334" evidence="2"/>
<dbReference type="EMBL" id="KM030271">
    <property type="protein sequence ID" value="AJE75769.1"/>
    <property type="molecule type" value="Genomic_DNA"/>
</dbReference>
<dbReference type="EMBL" id="FNUD01000002">
    <property type="protein sequence ID" value="SEF08080.1"/>
    <property type="molecule type" value="Genomic_DNA"/>
</dbReference>
<dbReference type="RefSeq" id="WP_048359798.1">
    <property type="nucleotide sequence ID" value="NZ_FNUD01000002.1"/>
</dbReference>
<dbReference type="SMR" id="A0A0F6P9C0"/>
<dbReference type="KEGG" id="ag:AJE75769"/>
<dbReference type="PATRIC" id="fig|882211.3.peg.2020"/>
<dbReference type="OrthoDB" id="9789029at2"/>
<dbReference type="BioCyc" id="MetaCyc:MONOMER-19896"/>
<dbReference type="BRENDA" id="2.1.1.334">
    <property type="organism ID" value="15037"/>
</dbReference>
<dbReference type="Proteomes" id="UP000183613">
    <property type="component" value="Unassembled WGS sequence"/>
</dbReference>
<dbReference type="GO" id="GO:0016020">
    <property type="term" value="C:membrane"/>
    <property type="evidence" value="ECO:0007669"/>
    <property type="project" value="UniProtKB-SubCell"/>
</dbReference>
<dbReference type="GO" id="GO:0008168">
    <property type="term" value="F:methyltransferase activity"/>
    <property type="evidence" value="ECO:0007669"/>
    <property type="project" value="UniProtKB-KW"/>
</dbReference>
<dbReference type="GO" id="GO:0032259">
    <property type="term" value="P:methylation"/>
    <property type="evidence" value="ECO:0007669"/>
    <property type="project" value="UniProtKB-KW"/>
</dbReference>
<dbReference type="Gene3D" id="1.20.120.1630">
    <property type="match status" value="1"/>
</dbReference>
<dbReference type="InterPro" id="IPR054700">
    <property type="entry name" value="MddA"/>
</dbReference>
<dbReference type="InterPro" id="IPR009915">
    <property type="entry name" value="NnrU_dom"/>
</dbReference>
<dbReference type="InterPro" id="IPR033580">
    <property type="entry name" value="Nurim-like"/>
</dbReference>
<dbReference type="NCBIfam" id="NF045656">
    <property type="entry name" value="MeththiolMtaseMddA"/>
    <property type="match status" value="1"/>
</dbReference>
<dbReference type="PANTHER" id="PTHR31040">
    <property type="entry name" value="NURIM"/>
    <property type="match status" value="1"/>
</dbReference>
<dbReference type="PANTHER" id="PTHR31040:SF1">
    <property type="entry name" value="NURIM"/>
    <property type="match status" value="1"/>
</dbReference>
<dbReference type="Pfam" id="PF07298">
    <property type="entry name" value="NnrU"/>
    <property type="match status" value="1"/>
</dbReference>
<keyword id="KW-0472">Membrane</keyword>
<keyword id="KW-0489">Methyltransferase</keyword>
<keyword id="KW-0949">S-adenosyl-L-methionine</keyword>
<keyword id="KW-0808">Transferase</keyword>
<keyword id="KW-0812">Transmembrane</keyword>
<keyword id="KW-1133">Transmembrane helix</keyword>
<comment type="function">
    <text evidence="2">Catalyzes the methylation of methanethiol (MeSH) to yield dimethylsulphide (DMS).</text>
</comment>
<comment type="catalytic activity">
    <reaction evidence="2">
        <text>methanethiol + S-adenosyl-L-methionine = dimethyl sulfide + S-adenosyl-L-homocysteine + H(+)</text>
        <dbReference type="Rhea" id="RHEA:50428"/>
        <dbReference type="ChEBI" id="CHEBI:15378"/>
        <dbReference type="ChEBI" id="CHEBI:16007"/>
        <dbReference type="ChEBI" id="CHEBI:17437"/>
        <dbReference type="ChEBI" id="CHEBI:57856"/>
        <dbReference type="ChEBI" id="CHEBI:59789"/>
        <dbReference type="EC" id="2.1.1.334"/>
    </reaction>
</comment>
<comment type="subcellular location">
    <subcellularLocation>
        <location evidence="2">Membrane</location>
        <topology evidence="1">Multi-pass membrane protein</topology>
    </subcellularLocation>
</comment>
<comment type="induction">
    <text evidence="2">Constitutively expressed.</text>
</comment>
<comment type="disruption phenotype">
    <text evidence="2">Cells lacking this gene are unable to produce dimethylsulphide (DMS).</text>
</comment>
<comment type="similarity">
    <text evidence="4">Belongs to the nurim family.</text>
</comment>
<name>MDDA_PSEDM</name>
<sequence>MHTRTAPRVRPPSRAAKLAGLLYSLLSYLFFLMTLLYLIGFVGNVGVPKTIDSGPGASWPLALLVDVLLITLFAVQHSVMARKSFKQWWRPVVPAPIERATYVLASSVVLVVMFWLWQPIDLRVWQVESRLGSAVLTTLFWLGWGLILVATFLISHFELFGVKQALDALRPAKPVDGSFRTPLLYKIVRHPMYMGFLMAFWATPEMTVGHLVFALTSTIYILIGTQLEEKDLVEIFGEKYRNYQKNVGMLLPSLRRNPGSQD</sequence>